<accession>B4SBX0</accession>
<keyword id="KW-1185">Reference proteome</keyword>
<keyword id="KW-0687">Ribonucleoprotein</keyword>
<keyword id="KW-0689">Ribosomal protein</keyword>
<feature type="chain" id="PRO_1000101053" description="Large ribosomal subunit protein bL36">
    <location>
        <begin position="1"/>
        <end position="38"/>
    </location>
</feature>
<comment type="similarity">
    <text evidence="1">Belongs to the bacterial ribosomal protein bL36 family.</text>
</comment>
<sequence length="38" mass="4588">MKIYSSIKKRCEHCRIVKRKGKRYVICKVNPSHKQRQG</sequence>
<proteinExistence type="inferred from homology"/>
<gene>
    <name evidence="1" type="primary">rpmJ</name>
    <name type="ordered locus">Ppha_0312</name>
</gene>
<dbReference type="EMBL" id="CP001110">
    <property type="protein sequence ID" value="ACF42645.1"/>
    <property type="molecule type" value="Genomic_DNA"/>
</dbReference>
<dbReference type="RefSeq" id="WP_011362841.1">
    <property type="nucleotide sequence ID" value="NC_011060.1"/>
</dbReference>
<dbReference type="SMR" id="B4SBX0"/>
<dbReference type="STRING" id="324925.Ppha_0312"/>
<dbReference type="KEGG" id="pph:Ppha_0312"/>
<dbReference type="eggNOG" id="COG0257">
    <property type="taxonomic scope" value="Bacteria"/>
</dbReference>
<dbReference type="HOGENOM" id="CLU_135723_6_2_10"/>
<dbReference type="OrthoDB" id="9801558at2"/>
<dbReference type="Proteomes" id="UP000002724">
    <property type="component" value="Chromosome"/>
</dbReference>
<dbReference type="GO" id="GO:1990904">
    <property type="term" value="C:ribonucleoprotein complex"/>
    <property type="evidence" value="ECO:0007669"/>
    <property type="project" value="UniProtKB-KW"/>
</dbReference>
<dbReference type="GO" id="GO:0005840">
    <property type="term" value="C:ribosome"/>
    <property type="evidence" value="ECO:0007669"/>
    <property type="project" value="UniProtKB-KW"/>
</dbReference>
<dbReference type="GO" id="GO:0003735">
    <property type="term" value="F:structural constituent of ribosome"/>
    <property type="evidence" value="ECO:0007669"/>
    <property type="project" value="InterPro"/>
</dbReference>
<dbReference type="GO" id="GO:0006412">
    <property type="term" value="P:translation"/>
    <property type="evidence" value="ECO:0007669"/>
    <property type="project" value="UniProtKB-UniRule"/>
</dbReference>
<dbReference type="HAMAP" id="MF_00251">
    <property type="entry name" value="Ribosomal_bL36"/>
    <property type="match status" value="1"/>
</dbReference>
<dbReference type="InterPro" id="IPR000473">
    <property type="entry name" value="Ribosomal_bL36"/>
</dbReference>
<dbReference type="InterPro" id="IPR035977">
    <property type="entry name" value="Ribosomal_bL36_sp"/>
</dbReference>
<dbReference type="InterPro" id="IPR052010">
    <property type="entry name" value="Ribosomal_LSU_bL36"/>
</dbReference>
<dbReference type="NCBIfam" id="TIGR01022">
    <property type="entry name" value="rpmJ_bact"/>
    <property type="match status" value="1"/>
</dbReference>
<dbReference type="PANTHER" id="PTHR18804">
    <property type="entry name" value="RIBOSOMAL PROTEIN"/>
    <property type="match status" value="1"/>
</dbReference>
<dbReference type="PANTHER" id="PTHR18804:SF16">
    <property type="entry name" value="RIBOSOMAL PROTEIN"/>
    <property type="match status" value="1"/>
</dbReference>
<dbReference type="Pfam" id="PF00444">
    <property type="entry name" value="Ribosomal_L36"/>
    <property type="match status" value="1"/>
</dbReference>
<dbReference type="SUPFAM" id="SSF57840">
    <property type="entry name" value="Ribosomal protein L36"/>
    <property type="match status" value="1"/>
</dbReference>
<dbReference type="PROSITE" id="PS00828">
    <property type="entry name" value="RIBOSOMAL_L36"/>
    <property type="match status" value="1"/>
</dbReference>
<evidence type="ECO:0000255" key="1">
    <source>
        <dbReference type="HAMAP-Rule" id="MF_00251"/>
    </source>
</evidence>
<evidence type="ECO:0000305" key="2"/>
<reference key="1">
    <citation type="submission" date="2008-06" db="EMBL/GenBank/DDBJ databases">
        <title>Complete sequence of Pelodictyon phaeoclathratiforme BU-1.</title>
        <authorList>
            <consortium name="US DOE Joint Genome Institute"/>
            <person name="Lucas S."/>
            <person name="Copeland A."/>
            <person name="Lapidus A."/>
            <person name="Glavina del Rio T."/>
            <person name="Dalin E."/>
            <person name="Tice H."/>
            <person name="Bruce D."/>
            <person name="Goodwin L."/>
            <person name="Pitluck S."/>
            <person name="Schmutz J."/>
            <person name="Larimer F."/>
            <person name="Land M."/>
            <person name="Hauser L."/>
            <person name="Kyrpides N."/>
            <person name="Mikhailova N."/>
            <person name="Liu Z."/>
            <person name="Li T."/>
            <person name="Zhao F."/>
            <person name="Overmann J."/>
            <person name="Bryant D.A."/>
            <person name="Richardson P."/>
        </authorList>
    </citation>
    <scope>NUCLEOTIDE SEQUENCE [LARGE SCALE GENOMIC DNA]</scope>
    <source>
        <strain>DSM 5477 / BU-1</strain>
    </source>
</reference>
<organism>
    <name type="scientific">Pelodictyon phaeoclathratiforme (strain DSM 5477 / BU-1)</name>
    <dbReference type="NCBI Taxonomy" id="324925"/>
    <lineage>
        <taxon>Bacteria</taxon>
        <taxon>Pseudomonadati</taxon>
        <taxon>Chlorobiota</taxon>
        <taxon>Chlorobiia</taxon>
        <taxon>Chlorobiales</taxon>
        <taxon>Chlorobiaceae</taxon>
        <taxon>Chlorobium/Pelodictyon group</taxon>
        <taxon>Pelodictyon</taxon>
    </lineage>
</organism>
<protein>
    <recommendedName>
        <fullName evidence="1">Large ribosomal subunit protein bL36</fullName>
    </recommendedName>
    <alternativeName>
        <fullName evidence="2">50S ribosomal protein L36</fullName>
    </alternativeName>
</protein>
<name>RL36_PELPB</name>